<protein>
    <recommendedName>
        <fullName>Keratin, type I cytoskeletal 10</fullName>
    </recommendedName>
    <alternativeName>
        <fullName>Cytokeratin-10</fullName>
        <shortName>CK-10</shortName>
    </alternativeName>
    <alternativeName>
        <fullName>Keratin-10</fullName>
        <shortName>K10</shortName>
    </alternativeName>
    <alternativeName>
        <fullName>Type I keratin Ka10</fullName>
    </alternativeName>
</protein>
<proteinExistence type="inferred from homology"/>
<sequence>MSVRFSSNSRQYSSARSGGGGGGGGGGSSIRVSSTKSSLGGGYSSGGFSGGSFSRGSSSGGCFGGSSGGYGGFGGGSFGGGYGGGSFGGGYGGGSFGGGYGGGSFGGGYGGGSFGGGSFGGGSFGGGSFGGGLGGDGGGLLSGNEKVTMQNLNDRLASYMNKVRDLEESNYELEGKIKEWYEKHGNSSQREPRDYSKYYKTIEDLKGQIVNLTTDNANVLLQIDNARLAADDFRLKYENEVALRQSVEADINGLRRVLDELTLSKADLEMQIESLTEELAYLKKNHEEEMKDLQNVSTGDVNVEMNAAPGVDLTQLLNNMRNQYEQLAEKNRKDAEAWFNEKSKELTTEIDSNIEQMSSHKSEITELRRTVQGLEIELQSQLALKQSLEASLAETEGRYCVQLSQIQSQISALEEQLQQIRAETECQNAEYQQLLDIKTRLENEIQTYRSLLEGEGGYVGNLQITLNCFPSEFHLAKLTQTQGKTRGWKGSNTNKTRVIKTIIEEVTPEGRVLSSMIESETKKHFY</sequence>
<organism>
    <name type="scientific">Rattus norvegicus</name>
    <name type="common">Rat</name>
    <dbReference type="NCBI Taxonomy" id="10116"/>
    <lineage>
        <taxon>Eukaryota</taxon>
        <taxon>Metazoa</taxon>
        <taxon>Chordata</taxon>
        <taxon>Craniata</taxon>
        <taxon>Vertebrata</taxon>
        <taxon>Euteleostomi</taxon>
        <taxon>Mammalia</taxon>
        <taxon>Eutheria</taxon>
        <taxon>Euarchontoglires</taxon>
        <taxon>Glires</taxon>
        <taxon>Rodentia</taxon>
        <taxon>Myomorpha</taxon>
        <taxon>Muroidea</taxon>
        <taxon>Muridae</taxon>
        <taxon>Murinae</taxon>
        <taxon>Rattus</taxon>
    </lineage>
</organism>
<reference evidence="7" key="1">
    <citation type="journal article" date="2004" name="Nature">
        <title>Genome sequence of the Brown Norway rat yields insights into mammalian evolution.</title>
        <authorList>
            <person name="Gibbs R.A."/>
            <person name="Weinstock G.M."/>
            <person name="Metzker M.L."/>
            <person name="Muzny D.M."/>
            <person name="Sodergren E.J."/>
            <person name="Scherer S."/>
            <person name="Scott G."/>
            <person name="Steffen D."/>
            <person name="Worley K.C."/>
            <person name="Burch P.E."/>
            <person name="Okwuonu G."/>
            <person name="Hines S."/>
            <person name="Lewis L."/>
            <person name="Deramo C."/>
            <person name="Delgado O."/>
            <person name="Dugan-Rocha S."/>
            <person name="Miner G."/>
            <person name="Morgan M."/>
            <person name="Hawes A."/>
            <person name="Gill R."/>
            <person name="Holt R.A."/>
            <person name="Adams M.D."/>
            <person name="Amanatides P.G."/>
            <person name="Baden-Tillson H."/>
            <person name="Barnstead M."/>
            <person name="Chin S."/>
            <person name="Evans C.A."/>
            <person name="Ferriera S."/>
            <person name="Fosler C."/>
            <person name="Glodek A."/>
            <person name="Gu Z."/>
            <person name="Jennings D."/>
            <person name="Kraft C.L."/>
            <person name="Nguyen T."/>
            <person name="Pfannkoch C.M."/>
            <person name="Sitter C."/>
            <person name="Sutton G.G."/>
            <person name="Venter J.C."/>
            <person name="Woodage T."/>
            <person name="Smith D."/>
            <person name="Lee H.-M."/>
            <person name="Gustafson E."/>
            <person name="Cahill P."/>
            <person name="Kana A."/>
            <person name="Doucette-Stamm L."/>
            <person name="Weinstock K."/>
            <person name="Fechtel K."/>
            <person name="Weiss R.B."/>
            <person name="Dunn D.M."/>
            <person name="Green E.D."/>
            <person name="Blakesley R.W."/>
            <person name="Bouffard G.G."/>
            <person name="De Jong P.J."/>
            <person name="Osoegawa K."/>
            <person name="Zhu B."/>
            <person name="Marra M."/>
            <person name="Schein J."/>
            <person name="Bosdet I."/>
            <person name="Fjell C."/>
            <person name="Jones S."/>
            <person name="Krzywinski M."/>
            <person name="Mathewson C."/>
            <person name="Siddiqui A."/>
            <person name="Wye N."/>
            <person name="McPherson J."/>
            <person name="Zhao S."/>
            <person name="Fraser C.M."/>
            <person name="Shetty J."/>
            <person name="Shatsman S."/>
            <person name="Geer K."/>
            <person name="Chen Y."/>
            <person name="Abramzon S."/>
            <person name="Nierman W.C."/>
            <person name="Havlak P.H."/>
            <person name="Chen R."/>
            <person name="Durbin K.J."/>
            <person name="Egan A."/>
            <person name="Ren Y."/>
            <person name="Song X.-Z."/>
            <person name="Li B."/>
            <person name="Liu Y."/>
            <person name="Qin X."/>
            <person name="Cawley S."/>
            <person name="Cooney A.J."/>
            <person name="D'Souza L.M."/>
            <person name="Martin K."/>
            <person name="Wu J.Q."/>
            <person name="Gonzalez-Garay M.L."/>
            <person name="Jackson A.R."/>
            <person name="Kalafus K.J."/>
            <person name="McLeod M.P."/>
            <person name="Milosavljevic A."/>
            <person name="Virk D."/>
            <person name="Volkov A."/>
            <person name="Wheeler D.A."/>
            <person name="Zhang Z."/>
            <person name="Bailey J.A."/>
            <person name="Eichler E.E."/>
            <person name="Tuzun E."/>
            <person name="Birney E."/>
            <person name="Mongin E."/>
            <person name="Ureta-Vidal A."/>
            <person name="Woodwark C."/>
            <person name="Zdobnov E."/>
            <person name="Bork P."/>
            <person name="Suyama M."/>
            <person name="Torrents D."/>
            <person name="Alexandersson M."/>
            <person name="Trask B.J."/>
            <person name="Young J.M."/>
            <person name="Huang H."/>
            <person name="Wang H."/>
            <person name="Xing H."/>
            <person name="Daniels S."/>
            <person name="Gietzen D."/>
            <person name="Schmidt J."/>
            <person name="Stevens K."/>
            <person name="Vitt U."/>
            <person name="Wingrove J."/>
            <person name="Camara F."/>
            <person name="Mar Alba M."/>
            <person name="Abril J.F."/>
            <person name="Guigo R."/>
            <person name="Smit A."/>
            <person name="Dubchak I."/>
            <person name="Rubin E.M."/>
            <person name="Couronne O."/>
            <person name="Poliakov A."/>
            <person name="Huebner N."/>
            <person name="Ganten D."/>
            <person name="Goesele C."/>
            <person name="Hummel O."/>
            <person name="Kreitler T."/>
            <person name="Lee Y.-A."/>
            <person name="Monti J."/>
            <person name="Schulz H."/>
            <person name="Zimdahl H."/>
            <person name="Himmelbauer H."/>
            <person name="Lehrach H."/>
            <person name="Jacob H.J."/>
            <person name="Bromberg S."/>
            <person name="Gullings-Handley J."/>
            <person name="Jensen-Seaman M.I."/>
            <person name="Kwitek A.E."/>
            <person name="Lazar J."/>
            <person name="Pasko D."/>
            <person name="Tonellato P.J."/>
            <person name="Twigger S."/>
            <person name="Ponting C.P."/>
            <person name="Duarte J.M."/>
            <person name="Rice S."/>
            <person name="Goodstadt L."/>
            <person name="Beatson S.A."/>
            <person name="Emes R.D."/>
            <person name="Winter E.E."/>
            <person name="Webber C."/>
            <person name="Brandt P."/>
            <person name="Nyakatura G."/>
            <person name="Adetobi M."/>
            <person name="Chiaromonte F."/>
            <person name="Elnitski L."/>
            <person name="Eswara P."/>
            <person name="Hardison R.C."/>
            <person name="Hou M."/>
            <person name="Kolbe D."/>
            <person name="Makova K."/>
            <person name="Miller W."/>
            <person name="Nekrutenko A."/>
            <person name="Riemer C."/>
            <person name="Schwartz S."/>
            <person name="Taylor J."/>
            <person name="Yang S."/>
            <person name="Zhang Y."/>
            <person name="Lindpaintner K."/>
            <person name="Andrews T.D."/>
            <person name="Caccamo M."/>
            <person name="Clamp M."/>
            <person name="Clarke L."/>
            <person name="Curwen V."/>
            <person name="Durbin R.M."/>
            <person name="Eyras E."/>
            <person name="Searle S.M."/>
            <person name="Cooper G.M."/>
            <person name="Batzoglou S."/>
            <person name="Brudno M."/>
            <person name="Sidow A."/>
            <person name="Stone E.A."/>
            <person name="Payseur B.A."/>
            <person name="Bourque G."/>
            <person name="Lopez-Otin C."/>
            <person name="Puente X.S."/>
            <person name="Chakrabarti K."/>
            <person name="Chatterji S."/>
            <person name="Dewey C."/>
            <person name="Pachter L."/>
            <person name="Bray N."/>
            <person name="Yap V.B."/>
            <person name="Caspi A."/>
            <person name="Tesler G."/>
            <person name="Pevzner P.A."/>
            <person name="Haussler D."/>
            <person name="Roskin K.M."/>
            <person name="Baertsch R."/>
            <person name="Clawson H."/>
            <person name="Furey T.S."/>
            <person name="Hinrichs A.S."/>
            <person name="Karolchik D."/>
            <person name="Kent W.J."/>
            <person name="Rosenbloom K.R."/>
            <person name="Trumbower H."/>
            <person name="Weirauch M."/>
            <person name="Cooper D.N."/>
            <person name="Stenson P.D."/>
            <person name="Ma B."/>
            <person name="Brent M."/>
            <person name="Arumugam M."/>
            <person name="Shteynberg D."/>
            <person name="Copley R.R."/>
            <person name="Taylor M.S."/>
            <person name="Riethman H."/>
            <person name="Mudunuri U."/>
            <person name="Peterson J."/>
            <person name="Guyer M."/>
            <person name="Felsenfeld A."/>
            <person name="Old S."/>
            <person name="Mockrin S."/>
            <person name="Collins F.S."/>
        </authorList>
    </citation>
    <scope>NUCLEOTIDE SEQUENCE [LARGE SCALE GENOMIC DNA]</scope>
    <source>
        <strain evidence="6">Brown Norway</strain>
    </source>
</reference>
<reference evidence="7 8" key="2">
    <citation type="journal article" date="2004" name="Eur. J. Cell Biol.">
        <title>Comprehensive analysis of keratin gene clusters in humans and rodents.</title>
        <authorList>
            <person name="Hesse M."/>
            <person name="Zimek A."/>
            <person name="Weber K."/>
            <person name="Magin T.M."/>
        </authorList>
    </citation>
    <scope>IDENTIFICATION</scope>
    <source>
        <strain evidence="8">Brown Norway</strain>
    </source>
</reference>
<keyword id="KW-0175">Coiled coil</keyword>
<keyword id="KW-0963">Cytoplasm</keyword>
<keyword id="KW-1015">Disulfide bond</keyword>
<keyword id="KW-0403">Intermediate filament</keyword>
<keyword id="KW-0416">Keratin</keyword>
<keyword id="KW-0597">Phosphoprotein</keyword>
<keyword id="KW-1185">Reference proteome</keyword>
<keyword id="KW-0964">Secreted</keyword>
<evidence type="ECO:0000250" key="1">
    <source>
        <dbReference type="UniProtKB" id="P02535"/>
    </source>
</evidence>
<evidence type="ECO:0000250" key="2">
    <source>
        <dbReference type="UniProtKB" id="P13645"/>
    </source>
</evidence>
<evidence type="ECO:0000255" key="3"/>
<evidence type="ECO:0000255" key="4">
    <source>
        <dbReference type="PROSITE-ProRule" id="PRU01188"/>
    </source>
</evidence>
<evidence type="ECO:0000256" key="5">
    <source>
        <dbReference type="SAM" id="MobiDB-lite"/>
    </source>
</evidence>
<evidence type="ECO:0000269" key="6">
    <source>
    </source>
</evidence>
<evidence type="ECO:0000305" key="7"/>
<evidence type="ECO:0000312" key="8">
    <source>
        <dbReference type="EMBL" id="DAA04466.1"/>
    </source>
</evidence>
<dbReference type="EMBL" id="AABR03074182">
    <property type="status" value="NOT_ANNOTATED_CDS"/>
    <property type="molecule type" value="Genomic_DNA"/>
</dbReference>
<dbReference type="EMBL" id="BK004032">
    <property type="protein sequence ID" value="DAA04466.1"/>
    <property type="molecule type" value="mRNA"/>
</dbReference>
<dbReference type="RefSeq" id="NP_001008804.1">
    <property type="nucleotide sequence ID" value="NM_001008804.1"/>
</dbReference>
<dbReference type="RefSeq" id="XP_063125642.1">
    <property type="nucleotide sequence ID" value="XM_063269572.1"/>
</dbReference>
<dbReference type="SMR" id="Q6IFW6"/>
<dbReference type="BioGRID" id="268782">
    <property type="interactions" value="2"/>
</dbReference>
<dbReference type="FunCoup" id="Q6IFW6">
    <property type="interactions" value="141"/>
</dbReference>
<dbReference type="STRING" id="10116.ENSRNOP00000029821"/>
<dbReference type="GlyGen" id="Q6IFW6">
    <property type="glycosylation" value="1 site, 1 O-linked glycan (1 site)"/>
</dbReference>
<dbReference type="iPTMnet" id="Q6IFW6"/>
<dbReference type="PhosphoSitePlus" id="Q6IFW6"/>
<dbReference type="jPOST" id="Q6IFW6"/>
<dbReference type="PaxDb" id="10116-ENSRNOP00000029821"/>
<dbReference type="Ensembl" id="ENSRNOT00000036023.4">
    <property type="protein sequence ID" value="ENSRNOP00000029821.2"/>
    <property type="gene ID" value="ENSRNOG00000030170.6"/>
</dbReference>
<dbReference type="GeneID" id="450225"/>
<dbReference type="UCSC" id="RGD:1359092">
    <property type="organism name" value="rat"/>
</dbReference>
<dbReference type="AGR" id="RGD:1359092"/>
<dbReference type="RGD" id="1359092">
    <property type="gene designation" value="Krt10"/>
</dbReference>
<dbReference type="eggNOG" id="ENOG502QV0B">
    <property type="taxonomic scope" value="Eukaryota"/>
</dbReference>
<dbReference type="GeneTree" id="ENSGT00940000160849"/>
<dbReference type="InParanoid" id="Q6IFW6"/>
<dbReference type="OMA" id="QGQPRDY"/>
<dbReference type="Reactome" id="R-RNO-6805567">
    <property type="pathway name" value="Keratinization"/>
</dbReference>
<dbReference type="Reactome" id="R-RNO-6809371">
    <property type="pathway name" value="Formation of the cornified envelope"/>
</dbReference>
<dbReference type="PRO" id="PR:Q6IFW6"/>
<dbReference type="Proteomes" id="UP000002494">
    <property type="component" value="Chromosome 10"/>
</dbReference>
<dbReference type="Bgee" id="ENSRNOG00000030170">
    <property type="expression patterns" value="Expressed in stomach and 20 other cell types or tissues"/>
</dbReference>
<dbReference type="ExpressionAtlas" id="Q6IFW6">
    <property type="expression patterns" value="baseline and differential"/>
</dbReference>
<dbReference type="GO" id="GO:0009986">
    <property type="term" value="C:cell surface"/>
    <property type="evidence" value="ECO:0007669"/>
    <property type="project" value="UniProtKB-SubCell"/>
</dbReference>
<dbReference type="GO" id="GO:0001533">
    <property type="term" value="C:cornified envelope"/>
    <property type="evidence" value="ECO:0000266"/>
    <property type="project" value="RGD"/>
</dbReference>
<dbReference type="GO" id="GO:0005737">
    <property type="term" value="C:cytoplasm"/>
    <property type="evidence" value="ECO:0000250"/>
    <property type="project" value="UniProtKB"/>
</dbReference>
<dbReference type="GO" id="GO:0005856">
    <property type="term" value="C:cytoskeleton"/>
    <property type="evidence" value="ECO:0000318"/>
    <property type="project" value="GO_Central"/>
</dbReference>
<dbReference type="GO" id="GO:0005576">
    <property type="term" value="C:extracellular region"/>
    <property type="evidence" value="ECO:0007669"/>
    <property type="project" value="UniProtKB-SubCell"/>
</dbReference>
<dbReference type="GO" id="GO:0045095">
    <property type="term" value="C:keratin filament"/>
    <property type="evidence" value="ECO:0000266"/>
    <property type="project" value="RGD"/>
</dbReference>
<dbReference type="GO" id="GO:0008092">
    <property type="term" value="F:cytoskeletal protein binding"/>
    <property type="evidence" value="ECO:0000266"/>
    <property type="project" value="RGD"/>
</dbReference>
<dbReference type="GO" id="GO:0046982">
    <property type="term" value="F:protein heterodimerization activity"/>
    <property type="evidence" value="ECO:0000250"/>
    <property type="project" value="UniProtKB"/>
</dbReference>
<dbReference type="GO" id="GO:0030280">
    <property type="term" value="F:structural constituent of skin epidermis"/>
    <property type="evidence" value="ECO:0000266"/>
    <property type="project" value="RGD"/>
</dbReference>
<dbReference type="GO" id="GO:0071277">
    <property type="term" value="P:cellular response to calcium ion"/>
    <property type="evidence" value="ECO:0000266"/>
    <property type="project" value="RGD"/>
</dbReference>
<dbReference type="GO" id="GO:0008544">
    <property type="term" value="P:epidermis development"/>
    <property type="evidence" value="ECO:0000266"/>
    <property type="project" value="RGD"/>
</dbReference>
<dbReference type="GO" id="GO:0030855">
    <property type="term" value="P:epithelial cell differentiation"/>
    <property type="evidence" value="ECO:0000318"/>
    <property type="project" value="GO_Central"/>
</dbReference>
<dbReference type="GO" id="GO:0045109">
    <property type="term" value="P:intermediate filament organization"/>
    <property type="evidence" value="ECO:0000266"/>
    <property type="project" value="RGD"/>
</dbReference>
<dbReference type="GO" id="GO:0003334">
    <property type="term" value="P:keratinocyte development"/>
    <property type="evidence" value="ECO:0000266"/>
    <property type="project" value="RGD"/>
</dbReference>
<dbReference type="GO" id="GO:0030216">
    <property type="term" value="P:keratinocyte differentiation"/>
    <property type="evidence" value="ECO:0000266"/>
    <property type="project" value="RGD"/>
</dbReference>
<dbReference type="GO" id="GO:0045684">
    <property type="term" value="P:positive regulation of epidermis development"/>
    <property type="evidence" value="ECO:0000250"/>
    <property type="project" value="UniProtKB"/>
</dbReference>
<dbReference type="GO" id="GO:0051290">
    <property type="term" value="P:protein heterotetramerization"/>
    <property type="evidence" value="ECO:0000250"/>
    <property type="project" value="UniProtKB"/>
</dbReference>
<dbReference type="GO" id="GO:0048863">
    <property type="term" value="P:stem cell differentiation"/>
    <property type="evidence" value="ECO:0000266"/>
    <property type="project" value="RGD"/>
</dbReference>
<dbReference type="FunFam" id="1.20.5.1160:FF:000002">
    <property type="entry name" value="Type I keratin 10"/>
    <property type="match status" value="1"/>
</dbReference>
<dbReference type="FunFam" id="1.20.5.170:FF:000002">
    <property type="entry name" value="Type I keratin KA11"/>
    <property type="match status" value="1"/>
</dbReference>
<dbReference type="FunFam" id="1.20.5.500:FF:000001">
    <property type="entry name" value="Type II keratin 23"/>
    <property type="match status" value="1"/>
</dbReference>
<dbReference type="Gene3D" id="1.20.5.170">
    <property type="match status" value="1"/>
</dbReference>
<dbReference type="Gene3D" id="1.20.5.500">
    <property type="entry name" value="Single helix bin"/>
    <property type="match status" value="1"/>
</dbReference>
<dbReference type="Gene3D" id="1.20.5.1160">
    <property type="entry name" value="Vasodilator-stimulated phosphoprotein"/>
    <property type="match status" value="1"/>
</dbReference>
<dbReference type="InterPro" id="IPR018039">
    <property type="entry name" value="IF_conserved"/>
</dbReference>
<dbReference type="InterPro" id="IPR039008">
    <property type="entry name" value="IF_rod_dom"/>
</dbReference>
<dbReference type="InterPro" id="IPR002957">
    <property type="entry name" value="Keratin_I"/>
</dbReference>
<dbReference type="PANTHER" id="PTHR23239">
    <property type="entry name" value="INTERMEDIATE FILAMENT"/>
    <property type="match status" value="1"/>
</dbReference>
<dbReference type="PANTHER" id="PTHR23239:SF137">
    <property type="entry name" value="KERATIN, TYPE I CYTOSKELETAL 10"/>
    <property type="match status" value="1"/>
</dbReference>
<dbReference type="Pfam" id="PF00038">
    <property type="entry name" value="Filament"/>
    <property type="match status" value="1"/>
</dbReference>
<dbReference type="PRINTS" id="PR01248">
    <property type="entry name" value="TYPE1KERATIN"/>
</dbReference>
<dbReference type="SMART" id="SM01391">
    <property type="entry name" value="Filament"/>
    <property type="match status" value="1"/>
</dbReference>
<dbReference type="SUPFAM" id="SSF64593">
    <property type="entry name" value="Intermediate filament protein, coiled coil region"/>
    <property type="match status" value="2"/>
</dbReference>
<dbReference type="PROSITE" id="PS00226">
    <property type="entry name" value="IF_ROD_1"/>
    <property type="match status" value="1"/>
</dbReference>
<dbReference type="PROSITE" id="PS51842">
    <property type="entry name" value="IF_ROD_2"/>
    <property type="match status" value="1"/>
</dbReference>
<name>K1C10_RAT</name>
<feature type="chain" id="PRO_0000257991" description="Keratin, type I cytoskeletal 10">
    <location>
        <begin position="1"/>
        <end position="526"/>
    </location>
</feature>
<feature type="domain" description="IF rod" evidence="4">
    <location>
        <begin position="145"/>
        <end position="459"/>
    </location>
</feature>
<feature type="region of interest" description="Head" evidence="3">
    <location>
        <begin position="1"/>
        <end position="144"/>
    </location>
</feature>
<feature type="region of interest" description="Disordered" evidence="5">
    <location>
        <begin position="1"/>
        <end position="40"/>
    </location>
</feature>
<feature type="region of interest" description="Coil 1A" evidence="3">
    <location>
        <begin position="145"/>
        <end position="180"/>
    </location>
</feature>
<feature type="region of interest" description="Linker 1" evidence="3">
    <location>
        <begin position="181"/>
        <end position="201"/>
    </location>
</feature>
<feature type="region of interest" description="Coil 1B" evidence="3">
    <location>
        <begin position="202"/>
        <end position="293"/>
    </location>
</feature>
<feature type="region of interest" description="Linker 12" evidence="3">
    <location>
        <begin position="294"/>
        <end position="316"/>
    </location>
</feature>
<feature type="region of interest" description="Coil 2" evidence="3">
    <location>
        <begin position="317"/>
        <end position="455"/>
    </location>
</feature>
<feature type="region of interest" description="Tail" evidence="3">
    <location>
        <begin position="456"/>
        <end position="526"/>
    </location>
</feature>
<feature type="compositionally biased region" description="Low complexity" evidence="5">
    <location>
        <begin position="1"/>
        <end position="16"/>
    </location>
</feature>
<feature type="compositionally biased region" description="Gly residues" evidence="5">
    <location>
        <begin position="17"/>
        <end position="28"/>
    </location>
</feature>
<feature type="modified residue" description="Phosphoserine" evidence="2">
    <location>
        <position position="17"/>
    </location>
</feature>
<feature type="modified residue" description="Phosphoserine" evidence="2">
    <location>
        <position position="38"/>
    </location>
</feature>
<feature type="modified residue" description="Phosphoserine" evidence="2">
    <location>
        <position position="49"/>
    </location>
</feature>
<feature type="modified residue" description="Phosphoserine" evidence="2">
    <location>
        <position position="52"/>
    </location>
</feature>
<feature type="modified residue" description="Phosphoserine" evidence="2">
    <location>
        <position position="169"/>
    </location>
</feature>
<feature type="disulfide bond" description="Interchain" evidence="2">
    <location>
        <position position="400"/>
    </location>
</feature>
<comment type="function">
    <text evidence="1">Plays a role in the establishment of the epidermal barrier on plantar skin (By similarity). Involved in the maintenance of cell layer development and keratin filament bundles in suprabasal cells of the epithelium (By similarity).</text>
</comment>
<comment type="subunit">
    <text evidence="1 2">Heterotetramer of two type I and two type II keratins. Heterodimer with KRT1 (By similarity). Two heterodimers of KRT1 and KRT10 form a heterotetramer (By similarity). The KRT10 subunit in the heterotetramer is probably disulfide-linked (By similarity).</text>
</comment>
<comment type="subcellular location">
    <subcellularLocation>
        <location evidence="2">Secreted</location>
        <location evidence="2">Extracellular space</location>
    </subcellularLocation>
    <subcellularLocation>
        <location evidence="2">Cell surface</location>
    </subcellularLocation>
    <subcellularLocation>
        <location evidence="1">Cytoplasm</location>
    </subcellularLocation>
</comment>
<comment type="miscellaneous">
    <text>There are two types of cytoskeletal and microfibrillar keratin: I (acidic; 40-55 kDa) and II (neutral to basic; 56-70 kDa).</text>
</comment>
<comment type="similarity">
    <text evidence="4">Belongs to the intermediate filament family.</text>
</comment>
<gene>
    <name evidence="2" type="primary">Krt10</name>
    <name evidence="8" type="synonym">Ka10</name>
</gene>
<accession>Q6IFW6</accession>